<comment type="function">
    <text evidence="3 5">Cytosolic aldo-keto reductase that catalyzes the NADH and NADPH-dependent reduction of ketosteroids to hydroxysteroids. Liver specific enzyme that acts as an NAD(P)(H)-dependent 3-, 17- and 20-ketosteroid reductase on the steroid nucleus and side chain (PubMed:15618685). Displays the ability to catalyze both oxidation and reduction in vitro, but most probably acts as a reductase in vivo since the oxidase activity measured in vitro is inhibited by physiological concentration of NADPH (By similarity). Acts preferentially as a 3-alpha-hydroxysteroid dehydrogenase (HSD) with a subsidiary 3-beta-HSD activity (PubMed:15618685). Catalyzes efficiently the transformation of the potent androgen 5-alpha-dihydrotestosterone (5alpha-DHT or 17beta-hydroxy-5alpha-androstan-3-one) into the less active form, 5-alpha-androstan-3-alpha,17-beta-diol (3-alpha-diol). Catalyzes the reduction of estrone into 17beta-estradiol but with low efficiency. Metabolizes a broad spectrum of natural and synthetic therapeutic steroid and plays an important role in metabolism of androgens, estrogens, progestereone and conjugated steroids. Catalyzes the biotransformation of the pesticide chlordecone (kepone) to its corresponding alcohol leading to increased biliary excretion of the pesticide and concomitant reduction of its neurotoxicity since bile is the major excretory route (By similarity).</text>
</comment>
<comment type="catalytic activity">
    <reaction evidence="3">
        <text>chlordecone alcohol + NADP(+) = chlordecone + NADPH + H(+)</text>
        <dbReference type="Rhea" id="RHEA:14401"/>
        <dbReference type="ChEBI" id="CHEBI:15378"/>
        <dbReference type="ChEBI" id="CHEBI:16548"/>
        <dbReference type="ChEBI" id="CHEBI:17184"/>
        <dbReference type="ChEBI" id="CHEBI:57783"/>
        <dbReference type="ChEBI" id="CHEBI:58349"/>
        <dbReference type="EC" id="1.1.1.225"/>
    </reaction>
</comment>
<comment type="catalytic activity">
    <reaction evidence="5">
        <text>a 3alpha-hydroxysteroid + NADP(+) = a 3-oxosteroid + NADPH + H(+)</text>
        <dbReference type="Rhea" id="RHEA:34783"/>
        <dbReference type="ChEBI" id="CHEBI:15378"/>
        <dbReference type="ChEBI" id="CHEBI:36835"/>
        <dbReference type="ChEBI" id="CHEBI:47788"/>
        <dbReference type="ChEBI" id="CHEBI:57783"/>
        <dbReference type="ChEBI" id="CHEBI:58349"/>
        <dbReference type="EC" id="1.1.1.357"/>
    </reaction>
</comment>
<comment type="catalytic activity">
    <reaction evidence="5">
        <text>a 3alpha-hydroxysteroid + NAD(+) = a 3-oxosteroid + NADH + H(+)</text>
        <dbReference type="Rhea" id="RHEA:34779"/>
        <dbReference type="ChEBI" id="CHEBI:15378"/>
        <dbReference type="ChEBI" id="CHEBI:36835"/>
        <dbReference type="ChEBI" id="CHEBI:47788"/>
        <dbReference type="ChEBI" id="CHEBI:57540"/>
        <dbReference type="ChEBI" id="CHEBI:57945"/>
        <dbReference type="EC" id="1.1.1.357"/>
    </reaction>
</comment>
<comment type="catalytic activity">
    <reaction evidence="3">
        <text>5alpha-androstane-3alpha,17beta-diol + NADP(+) = 17beta-hydroxy-5alpha-androstan-3-one + NADPH + H(+)</text>
        <dbReference type="Rhea" id="RHEA:42116"/>
        <dbReference type="ChEBI" id="CHEBI:15378"/>
        <dbReference type="ChEBI" id="CHEBI:16330"/>
        <dbReference type="ChEBI" id="CHEBI:36713"/>
        <dbReference type="ChEBI" id="CHEBI:57783"/>
        <dbReference type="ChEBI" id="CHEBI:58349"/>
    </reaction>
    <physiologicalReaction direction="right-to-left" evidence="3">
        <dbReference type="Rhea" id="RHEA:42118"/>
    </physiologicalReaction>
</comment>
<comment type="catalytic activity">
    <reaction evidence="3">
        <text>5alpha-androstane-3beta,17beta-diol + NADP(+) = 17beta-hydroxy-5alpha-androstan-3-one + NADPH + H(+)</text>
        <dbReference type="Rhea" id="RHEA:16297"/>
        <dbReference type="ChEBI" id="CHEBI:15378"/>
        <dbReference type="ChEBI" id="CHEBI:16330"/>
        <dbReference type="ChEBI" id="CHEBI:18329"/>
        <dbReference type="ChEBI" id="CHEBI:57783"/>
        <dbReference type="ChEBI" id="CHEBI:58349"/>
        <dbReference type="EC" id="1.1.1.210"/>
    </reaction>
    <physiologicalReaction direction="right-to-left" evidence="3">
        <dbReference type="Rhea" id="RHEA:16299"/>
    </physiologicalReaction>
</comment>
<comment type="catalytic activity">
    <reaction evidence="3">
        <text>5alpha-androstane-3alpha,17beta-diol + NAD(+) = 17beta-hydroxy-5alpha-androstan-3-one + NADH + H(+)</text>
        <dbReference type="Rhea" id="RHEA:42004"/>
        <dbReference type="ChEBI" id="CHEBI:15378"/>
        <dbReference type="ChEBI" id="CHEBI:16330"/>
        <dbReference type="ChEBI" id="CHEBI:36713"/>
        <dbReference type="ChEBI" id="CHEBI:57540"/>
        <dbReference type="ChEBI" id="CHEBI:57945"/>
        <dbReference type="EC" id="1.1.1.53"/>
    </reaction>
    <physiologicalReaction direction="left-to-right" evidence="3">
        <dbReference type="Rhea" id="RHEA:42005"/>
    </physiologicalReaction>
    <physiologicalReaction direction="right-to-left" evidence="3">
        <dbReference type="Rhea" id="RHEA:42006"/>
    </physiologicalReaction>
</comment>
<comment type="catalytic activity">
    <reaction evidence="3">
        <text>17beta-estradiol + NADP(+) = estrone + NADPH + H(+)</text>
        <dbReference type="Rhea" id="RHEA:24616"/>
        <dbReference type="ChEBI" id="CHEBI:15378"/>
        <dbReference type="ChEBI" id="CHEBI:16469"/>
        <dbReference type="ChEBI" id="CHEBI:17263"/>
        <dbReference type="ChEBI" id="CHEBI:57783"/>
        <dbReference type="ChEBI" id="CHEBI:58349"/>
        <dbReference type="EC" id="1.1.1.62"/>
    </reaction>
    <physiologicalReaction direction="left-to-right" evidence="3">
        <dbReference type="Rhea" id="RHEA:24617"/>
    </physiologicalReaction>
    <physiologicalReaction direction="right-to-left" evidence="3">
        <dbReference type="Rhea" id="RHEA:24618"/>
    </physiologicalReaction>
</comment>
<comment type="catalytic activity">
    <reaction evidence="3">
        <text>17beta-estradiol + NAD(+) = estrone + NADH + H(+)</text>
        <dbReference type="Rhea" id="RHEA:24612"/>
        <dbReference type="ChEBI" id="CHEBI:15378"/>
        <dbReference type="ChEBI" id="CHEBI:16469"/>
        <dbReference type="ChEBI" id="CHEBI:17263"/>
        <dbReference type="ChEBI" id="CHEBI:57540"/>
        <dbReference type="ChEBI" id="CHEBI:57945"/>
        <dbReference type="EC" id="1.1.1.62"/>
    </reaction>
    <physiologicalReaction direction="left-to-right" evidence="3">
        <dbReference type="Rhea" id="RHEA:24613"/>
    </physiologicalReaction>
    <physiologicalReaction direction="right-to-left" evidence="3">
        <dbReference type="Rhea" id="RHEA:24614"/>
    </physiologicalReaction>
</comment>
<comment type="catalytic activity">
    <reaction evidence="3">
        <text>(20S)-hydroxypregn-4-en-3-one + NADP(+) = progesterone + NADPH + H(+)</text>
        <dbReference type="Rhea" id="RHEA:42112"/>
        <dbReference type="ChEBI" id="CHEBI:15378"/>
        <dbReference type="ChEBI" id="CHEBI:17026"/>
        <dbReference type="ChEBI" id="CHEBI:28453"/>
        <dbReference type="ChEBI" id="CHEBI:57783"/>
        <dbReference type="ChEBI" id="CHEBI:58349"/>
    </reaction>
    <physiologicalReaction direction="left-to-right" evidence="3">
        <dbReference type="Rhea" id="RHEA:42113"/>
    </physiologicalReaction>
    <physiologicalReaction direction="right-to-left" evidence="3">
        <dbReference type="Rhea" id="RHEA:42114"/>
    </physiologicalReaction>
</comment>
<comment type="catalytic activity">
    <reaction evidence="3">
        <text>(20S)-hydroxypregn-4-en-3-one + NAD(+) = progesterone + NADH + H(+)</text>
        <dbReference type="Rhea" id="RHEA:42108"/>
        <dbReference type="ChEBI" id="CHEBI:15378"/>
        <dbReference type="ChEBI" id="CHEBI:17026"/>
        <dbReference type="ChEBI" id="CHEBI:28453"/>
        <dbReference type="ChEBI" id="CHEBI:57540"/>
        <dbReference type="ChEBI" id="CHEBI:57945"/>
    </reaction>
    <physiologicalReaction direction="left-to-right" evidence="3">
        <dbReference type="Rhea" id="RHEA:42109"/>
    </physiologicalReaction>
    <physiologicalReaction direction="right-to-left" evidence="3">
        <dbReference type="Rhea" id="RHEA:42110"/>
    </physiologicalReaction>
</comment>
<comment type="catalytic activity">
    <reaction evidence="3">
        <text>androsterone + NADP(+) = 5alpha-androstan-3,17-dione + NADPH + H(+)</text>
        <dbReference type="Rhea" id="RHEA:20377"/>
        <dbReference type="ChEBI" id="CHEBI:15378"/>
        <dbReference type="ChEBI" id="CHEBI:15994"/>
        <dbReference type="ChEBI" id="CHEBI:16032"/>
        <dbReference type="ChEBI" id="CHEBI:57783"/>
        <dbReference type="ChEBI" id="CHEBI:58349"/>
        <dbReference type="EC" id="1.1.1.209"/>
    </reaction>
    <physiologicalReaction direction="left-to-right" evidence="3">
        <dbReference type="Rhea" id="RHEA:20378"/>
    </physiologicalReaction>
</comment>
<comment type="catalytic activity">
    <reaction evidence="3">
        <text>testosterone + NADP(+) = androst-4-ene-3,17-dione + NADPH + H(+)</text>
        <dbReference type="Rhea" id="RHEA:14981"/>
        <dbReference type="ChEBI" id="CHEBI:15378"/>
        <dbReference type="ChEBI" id="CHEBI:16422"/>
        <dbReference type="ChEBI" id="CHEBI:17347"/>
        <dbReference type="ChEBI" id="CHEBI:57783"/>
        <dbReference type="ChEBI" id="CHEBI:58349"/>
        <dbReference type="EC" id="1.1.1.51"/>
    </reaction>
    <physiologicalReaction direction="left-to-right" evidence="3">
        <dbReference type="Rhea" id="RHEA:14982"/>
    </physiologicalReaction>
</comment>
<comment type="catalytic activity">
    <reaction evidence="3">
        <text>testosterone + NAD(+) = androst-4-ene-3,17-dione + NADH + H(+)</text>
        <dbReference type="Rhea" id="RHEA:14929"/>
        <dbReference type="ChEBI" id="CHEBI:15378"/>
        <dbReference type="ChEBI" id="CHEBI:16422"/>
        <dbReference type="ChEBI" id="CHEBI:17347"/>
        <dbReference type="ChEBI" id="CHEBI:57540"/>
        <dbReference type="ChEBI" id="CHEBI:57945"/>
        <dbReference type="EC" id="1.1.1.51"/>
    </reaction>
    <physiologicalReaction direction="left-to-right" evidence="3">
        <dbReference type="Rhea" id="RHEA:14930"/>
    </physiologicalReaction>
</comment>
<comment type="catalytic activity">
    <reaction evidence="3">
        <text>3alpha-hydroxy-5alpha-androstane 17-O-(beta-D-glucuronate) + NADP(+) = 5alpha-dihydrotestosterone 17-O-(beta-D-glucuronate) + NADPH + H(+)</text>
        <dbReference type="Rhea" id="RHEA:53112"/>
        <dbReference type="ChEBI" id="CHEBI:15378"/>
        <dbReference type="ChEBI" id="CHEBI:57783"/>
        <dbReference type="ChEBI" id="CHEBI:58349"/>
        <dbReference type="ChEBI" id="CHEBI:133519"/>
        <dbReference type="ChEBI" id="CHEBI:136914"/>
    </reaction>
    <physiologicalReaction direction="right-to-left" evidence="3">
        <dbReference type="Rhea" id="RHEA:53114"/>
    </physiologicalReaction>
</comment>
<comment type="catalytic activity">
    <reaction evidence="3">
        <text>(3beta,5alpha,17beta)-3-hydroxy-androstan-17-yl sulfate + NADP(+) = 5alpha-dihydrotestosterone sulfate + NADPH + H(+)</text>
        <dbReference type="Rhea" id="RHEA:53136"/>
        <dbReference type="ChEBI" id="CHEBI:15378"/>
        <dbReference type="ChEBI" id="CHEBI:57783"/>
        <dbReference type="ChEBI" id="CHEBI:58349"/>
        <dbReference type="ChEBI" id="CHEBI:133105"/>
        <dbReference type="ChEBI" id="CHEBI:136982"/>
    </reaction>
    <physiologicalReaction direction="right-to-left" evidence="3">
        <dbReference type="Rhea" id="RHEA:53138"/>
    </physiologicalReaction>
</comment>
<comment type="catalytic activity">
    <reaction evidence="3">
        <text>5alpha-androstane-3alpha,17beta-diol + NAD(+) = androsterone + NADH + H(+)</text>
        <dbReference type="Rhea" id="RHEA:42124"/>
        <dbReference type="ChEBI" id="CHEBI:15378"/>
        <dbReference type="ChEBI" id="CHEBI:16032"/>
        <dbReference type="ChEBI" id="CHEBI:36713"/>
        <dbReference type="ChEBI" id="CHEBI:57540"/>
        <dbReference type="ChEBI" id="CHEBI:57945"/>
    </reaction>
    <physiologicalReaction direction="left-to-right" evidence="3">
        <dbReference type="Rhea" id="RHEA:42125"/>
    </physiologicalReaction>
</comment>
<comment type="activity regulation">
    <text evidence="5">Potently inhibited by benzbromarone, 3',3'',5',5''-tetrabromophenolphthalein (TBPP) and o-cresolphthalein.</text>
</comment>
<comment type="biophysicochemical properties">
    <kinetics>
        <KM evidence="5">0.6 uM for 5alpha-pregnane-3alpha,21-diol-20-one</KM>
        <KM evidence="5">0.3 uM for 5-alpha-pregnan-20-alpha-ol-3-one</KM>
        <KM evidence="5">0.7 uM for 3alpha-hydroxy-5alpha-androstan-17-one</KM>
        <KM evidence="5">0.3 uM for 5-beta-pregnan-20-alpha-ol-3-one</KM>
        <KM evidence="5">25 uM for trans-benzene dihydrodiol</KM>
        <KM evidence="5">420 uM for (s)-tetralol</KM>
        <text evidence="5">kcat is 4.9 min(-1) for 5-beta-pregnan-20-alpha-ol-3-one as substrate. kcat is 4.9 min(-1) for 3alpha-hydroxy-5alpha-androstan-17-one as substrate. kcat is 23 min(-1) for 5alpha-pregnane-3alpha,21-diol-20-one.</text>
    </kinetics>
</comment>
<comment type="pathway">
    <text evidence="3">Steroid metabolism.</text>
</comment>
<comment type="subunit">
    <text evidence="3">Monomer.</text>
</comment>
<comment type="subcellular location">
    <subcellularLocation>
        <location evidence="4">Cytoplasm</location>
        <location evidence="4">Cytosol</location>
    </subcellularLocation>
</comment>
<comment type="tissue specificity">
    <text evidence="5">High expression in liver. Also expressed in kidney.</text>
</comment>
<comment type="similarity">
    <text evidence="7">Belongs to the aldo/keto reductase family.</text>
</comment>
<accession>Q95JH4</accession>
<protein>
    <recommendedName>
        <fullName>Aldo-keto reductase family 1 member C4</fullName>
        <ecNumber evidence="5">1.1.1.-</ecNumber>
        <ecNumber evidence="3">1.1.1.209</ecNumber>
        <ecNumber evidence="3">1.1.1.210</ecNumber>
        <ecNumber evidence="3">1.1.1.51</ecNumber>
        <ecNumber evidence="3">1.1.1.53</ecNumber>
        <ecNumber evidence="3">1.1.1.62</ecNumber>
    </recommendedName>
    <alternativeName>
        <fullName>3-alpha-hydroxysteroid dehydrogenase type I</fullName>
        <shortName>3-alpha-HSD1</shortName>
        <ecNumber evidence="5">1.1.1.357</ecNumber>
    </alternativeName>
    <alternativeName>
        <fullName>3alpha-hydroxysteroid 3-dehydrogenase</fullName>
    </alternativeName>
    <alternativeName>
        <fullName>Chlordecone reductase homolog</fullName>
        <shortName>CDR</shortName>
        <ecNumber evidence="3">1.1.1.225</ecNumber>
    </alternativeName>
    <alternativeName>
        <fullName evidence="6">Dihydrodiol dehydrogenase 4</fullName>
        <shortName evidence="6">DD-4</shortName>
        <shortName evidence="6">DD4</shortName>
    </alternativeName>
    <alternativeName>
        <fullName>HAKRA</fullName>
    </alternativeName>
</protein>
<gene>
    <name type="primary">AKR1C4</name>
</gene>
<dbReference type="EC" id="1.1.1.-" evidence="5"/>
<dbReference type="EC" id="1.1.1.209" evidence="3"/>
<dbReference type="EC" id="1.1.1.210" evidence="3"/>
<dbReference type="EC" id="1.1.1.51" evidence="3"/>
<dbReference type="EC" id="1.1.1.53" evidence="3"/>
<dbReference type="EC" id="1.1.1.62" evidence="3"/>
<dbReference type="EC" id="1.1.1.357" evidence="5"/>
<dbReference type="EC" id="1.1.1.225" evidence="3"/>
<dbReference type="EMBL" id="AB070212">
    <property type="protein sequence ID" value="BAB63209.2"/>
    <property type="molecule type" value="mRNA"/>
</dbReference>
<dbReference type="SMR" id="Q95JH4"/>
<dbReference type="BRENDA" id="1.3.1.20">
    <property type="organism ID" value="3123"/>
</dbReference>
<dbReference type="GO" id="GO:0005829">
    <property type="term" value="C:cytosol"/>
    <property type="evidence" value="ECO:0007669"/>
    <property type="project" value="UniProtKB-SubCell"/>
</dbReference>
<dbReference type="GO" id="GO:0047024">
    <property type="term" value="F:5-alpha-androstane-3-beta,17-beta-diol dehydrogenase (NADP+) activity"/>
    <property type="evidence" value="ECO:0007669"/>
    <property type="project" value="UniProtKB-EC"/>
</dbReference>
<dbReference type="GO" id="GO:0047044">
    <property type="term" value="F:androstan-3-alpha,17-beta-diol dehydrogenase (NAD+) activity"/>
    <property type="evidence" value="ECO:0007669"/>
    <property type="project" value="UniProtKB-EC"/>
</dbReference>
<dbReference type="GO" id="GO:0047023">
    <property type="term" value="F:androsterone dehydrogenase [NAD(P)+] activity"/>
    <property type="evidence" value="ECO:0007669"/>
    <property type="project" value="UniProtKB-EC"/>
</dbReference>
<dbReference type="GO" id="GO:0047743">
    <property type="term" value="F:chlordecone reductase activity"/>
    <property type="evidence" value="ECO:0007669"/>
    <property type="project" value="UniProtKB-EC"/>
</dbReference>
<dbReference type="GO" id="GO:0004303">
    <property type="term" value="F:estradiol 17-beta-dehydrogenase [NAD(P)+] activity"/>
    <property type="evidence" value="ECO:0007669"/>
    <property type="project" value="UniProtKB-EC"/>
</dbReference>
<dbReference type="GO" id="GO:0047045">
    <property type="term" value="F:testosterone 17-beta-dehydrogenase (NADP+) activity"/>
    <property type="evidence" value="ECO:0007669"/>
    <property type="project" value="RHEA"/>
</dbReference>
<dbReference type="GO" id="GO:0047035">
    <property type="term" value="F:testosterone dehydrogenase (NAD+) activity"/>
    <property type="evidence" value="ECO:0007669"/>
    <property type="project" value="RHEA"/>
</dbReference>
<dbReference type="GO" id="GO:0006629">
    <property type="term" value="P:lipid metabolic process"/>
    <property type="evidence" value="ECO:0007669"/>
    <property type="project" value="UniProtKB-KW"/>
</dbReference>
<dbReference type="CDD" id="cd19108">
    <property type="entry name" value="AKR_AKR1C1-35"/>
    <property type="match status" value="1"/>
</dbReference>
<dbReference type="FunFam" id="3.20.20.100:FF:000003">
    <property type="entry name" value="Aldo-keto reductase family 1 member C3"/>
    <property type="match status" value="1"/>
</dbReference>
<dbReference type="Gene3D" id="3.20.20.100">
    <property type="entry name" value="NADP-dependent oxidoreductase domain"/>
    <property type="match status" value="1"/>
</dbReference>
<dbReference type="InterPro" id="IPR020471">
    <property type="entry name" value="AKR"/>
</dbReference>
<dbReference type="InterPro" id="IPR044482">
    <property type="entry name" value="AKR1C"/>
</dbReference>
<dbReference type="InterPro" id="IPR018170">
    <property type="entry name" value="Aldo/ket_reductase_CS"/>
</dbReference>
<dbReference type="InterPro" id="IPR023210">
    <property type="entry name" value="NADP_OxRdtase_dom"/>
</dbReference>
<dbReference type="InterPro" id="IPR036812">
    <property type="entry name" value="NADP_OxRdtase_dom_sf"/>
</dbReference>
<dbReference type="PANTHER" id="PTHR11732">
    <property type="entry name" value="ALDO/KETO REDUCTASE"/>
    <property type="match status" value="1"/>
</dbReference>
<dbReference type="Pfam" id="PF00248">
    <property type="entry name" value="Aldo_ket_red"/>
    <property type="match status" value="1"/>
</dbReference>
<dbReference type="PIRSF" id="PIRSF000097">
    <property type="entry name" value="AKR"/>
    <property type="match status" value="1"/>
</dbReference>
<dbReference type="PRINTS" id="PR00069">
    <property type="entry name" value="ALDKETRDTASE"/>
</dbReference>
<dbReference type="SUPFAM" id="SSF51430">
    <property type="entry name" value="NAD(P)-linked oxidoreductase"/>
    <property type="match status" value="1"/>
</dbReference>
<dbReference type="PROSITE" id="PS00798">
    <property type="entry name" value="ALDOKETO_REDUCTASE_1"/>
    <property type="match status" value="1"/>
</dbReference>
<dbReference type="PROSITE" id="PS00062">
    <property type="entry name" value="ALDOKETO_REDUCTASE_2"/>
    <property type="match status" value="1"/>
</dbReference>
<dbReference type="PROSITE" id="PS00063">
    <property type="entry name" value="ALDOKETO_REDUCTASE_3"/>
    <property type="match status" value="1"/>
</dbReference>
<proteinExistence type="evidence at protein level"/>
<feature type="chain" id="PRO_0000124642" description="Aldo-keto reductase family 1 member C4">
    <location>
        <begin position="1"/>
        <end position="323"/>
    </location>
</feature>
<feature type="active site" description="Proton donor" evidence="1">
    <location>
        <position position="55"/>
    </location>
</feature>
<feature type="binding site" evidence="3">
    <location>
        <begin position="20"/>
        <end position="24"/>
    </location>
    <ligand>
        <name>NADP(+)</name>
        <dbReference type="ChEBI" id="CHEBI:58349"/>
    </ligand>
</feature>
<feature type="binding site" evidence="3">
    <location>
        <position position="50"/>
    </location>
    <ligand>
        <name>NADP(+)</name>
        <dbReference type="ChEBI" id="CHEBI:58349"/>
    </ligand>
</feature>
<feature type="binding site" evidence="1">
    <location>
        <position position="117"/>
    </location>
    <ligand>
        <name>substrate</name>
    </ligand>
</feature>
<feature type="binding site" evidence="3">
    <location>
        <begin position="166"/>
        <end position="167"/>
    </location>
    <ligand>
        <name>NADP(+)</name>
        <dbReference type="ChEBI" id="CHEBI:58349"/>
    </ligand>
</feature>
<feature type="binding site" evidence="3">
    <location>
        <position position="190"/>
    </location>
    <ligand>
        <name>NADP(+)</name>
        <dbReference type="ChEBI" id="CHEBI:58349"/>
    </ligand>
</feature>
<feature type="binding site" evidence="3">
    <location>
        <begin position="216"/>
        <end position="221"/>
    </location>
    <ligand>
        <name>NADP(+)</name>
        <dbReference type="ChEBI" id="CHEBI:58349"/>
    </ligand>
</feature>
<feature type="binding site" evidence="3">
    <location>
        <begin position="270"/>
        <end position="280"/>
    </location>
    <ligand>
        <name>NADP(+)</name>
        <dbReference type="ChEBI" id="CHEBI:58349"/>
    </ligand>
</feature>
<feature type="site" description="Important for substrate specificity" evidence="1">
    <location>
        <position position="54"/>
    </location>
</feature>
<feature type="site" description="Lowers pKa of active site Tyr" evidence="2">
    <location>
        <position position="84"/>
    </location>
</feature>
<organism>
    <name type="scientific">Macaca fuscata fuscata</name>
    <name type="common">Japanese macaque</name>
    <dbReference type="NCBI Taxonomy" id="9543"/>
    <lineage>
        <taxon>Eukaryota</taxon>
        <taxon>Metazoa</taxon>
        <taxon>Chordata</taxon>
        <taxon>Craniata</taxon>
        <taxon>Vertebrata</taxon>
        <taxon>Euteleostomi</taxon>
        <taxon>Mammalia</taxon>
        <taxon>Eutheria</taxon>
        <taxon>Euarchontoglires</taxon>
        <taxon>Primates</taxon>
        <taxon>Haplorrhini</taxon>
        <taxon>Catarrhini</taxon>
        <taxon>Cercopithecidae</taxon>
        <taxon>Cercopithecinae</taxon>
        <taxon>Macaca</taxon>
    </lineage>
</organism>
<sequence>MDPKYQRVALNDGHFMPVLGFGSYAPPEVPRNRVVEVTKLAIEAGFRHIDSAYLYNNEEQVGLAIRSKIADGSVKREDIFYTSKLWCTFFRPQLVQPALESSLKKLQLDYVDLYLIHFPMALKPGETPLPKDENGKVMFDTVDLCAIWEAMEKCKDAGLAKSIGVSNFNRRQLEMILNNPGLKYKPVCNQVECHPYLNQSKLLDFCKSKDIVLVAHSALGTQRHKLWVDQNSPALLEDPVLCALAKKHKRSPALIALRYQLQRGVVVLAKSYNEQRIRENVQVFEFQLTSEDMKVLDDLNRNFRYVVMDFLVDHPDYPFSDEY</sequence>
<reference key="1">
    <citation type="journal article" date="2002" name="Drug Metab. Pharmacokinet.">
        <title>Molecular characterization of two monkey dihydrodiol dehydrogenases.</title>
        <authorList>
            <person name="Higaki Y."/>
            <person name="Kamiya T."/>
            <person name="Usami N."/>
            <person name="Shintani S."/>
            <person name="Shiraishi H."/>
            <person name="Ishikura S."/>
            <person name="Yamamoto I."/>
            <person name="Hara A."/>
        </authorList>
    </citation>
    <scope>NUCLEOTIDE SEQUENCE [MRNA]</scope>
    <scope>TISSUE SPECIFICITY</scope>
    <scope>FUNCTION</scope>
    <scope>CATALYTIC ACTIVITY</scope>
    <scope>BIOPHYSICOCHEMICAL PROPERTIES</scope>
    <scope>SUBSTRATE SPECIFICITY</scope>
    <source>
        <tissue>Liver</tissue>
    </source>
</reference>
<evidence type="ECO:0000250" key="1"/>
<evidence type="ECO:0000250" key="2">
    <source>
        <dbReference type="UniProtKB" id="P14550"/>
    </source>
</evidence>
<evidence type="ECO:0000250" key="3">
    <source>
        <dbReference type="UniProtKB" id="P17516"/>
    </source>
</evidence>
<evidence type="ECO:0000250" key="4">
    <source>
        <dbReference type="UniProtKB" id="Q04828"/>
    </source>
</evidence>
<evidence type="ECO:0000269" key="5">
    <source>
    </source>
</evidence>
<evidence type="ECO:0000303" key="6">
    <source>
    </source>
</evidence>
<evidence type="ECO:0000305" key="7"/>
<keyword id="KW-0963">Cytoplasm</keyword>
<keyword id="KW-0443">Lipid metabolism</keyword>
<keyword id="KW-0521">NADP</keyword>
<keyword id="KW-0560">Oxidoreductase</keyword>
<name>AK1C4_MACFU</name>